<protein>
    <recommendedName>
        <fullName evidence="1">Large ribosomal subunit protein uL1</fullName>
    </recommendedName>
    <alternativeName>
        <fullName evidence="2">50S ribosomal protein L1</fullName>
    </alternativeName>
</protein>
<organism>
    <name type="scientific">Listeria monocytogenes serovar 1/2a (strain ATCC BAA-679 / EGD-e)</name>
    <dbReference type="NCBI Taxonomy" id="169963"/>
    <lineage>
        <taxon>Bacteria</taxon>
        <taxon>Bacillati</taxon>
        <taxon>Bacillota</taxon>
        <taxon>Bacilli</taxon>
        <taxon>Bacillales</taxon>
        <taxon>Listeriaceae</taxon>
        <taxon>Listeria</taxon>
    </lineage>
</organism>
<proteinExistence type="inferred from homology"/>
<keyword id="KW-1185">Reference proteome</keyword>
<keyword id="KW-0678">Repressor</keyword>
<keyword id="KW-0687">Ribonucleoprotein</keyword>
<keyword id="KW-0689">Ribosomal protein</keyword>
<keyword id="KW-0694">RNA-binding</keyword>
<keyword id="KW-0699">rRNA-binding</keyword>
<keyword id="KW-0810">Translation regulation</keyword>
<keyword id="KW-0820">tRNA-binding</keyword>
<evidence type="ECO:0000255" key="1">
    <source>
        <dbReference type="HAMAP-Rule" id="MF_01318"/>
    </source>
</evidence>
<evidence type="ECO:0000305" key="2"/>
<accession>Q8YAA4</accession>
<reference key="1">
    <citation type="journal article" date="2001" name="Science">
        <title>Comparative genomics of Listeria species.</title>
        <authorList>
            <person name="Glaser P."/>
            <person name="Frangeul L."/>
            <person name="Buchrieser C."/>
            <person name="Rusniok C."/>
            <person name="Amend A."/>
            <person name="Baquero F."/>
            <person name="Berche P."/>
            <person name="Bloecker H."/>
            <person name="Brandt P."/>
            <person name="Chakraborty T."/>
            <person name="Charbit A."/>
            <person name="Chetouani F."/>
            <person name="Couve E."/>
            <person name="de Daruvar A."/>
            <person name="Dehoux P."/>
            <person name="Domann E."/>
            <person name="Dominguez-Bernal G."/>
            <person name="Duchaud E."/>
            <person name="Durant L."/>
            <person name="Dussurget O."/>
            <person name="Entian K.-D."/>
            <person name="Fsihi H."/>
            <person name="Garcia-del Portillo F."/>
            <person name="Garrido P."/>
            <person name="Gautier L."/>
            <person name="Goebel W."/>
            <person name="Gomez-Lopez N."/>
            <person name="Hain T."/>
            <person name="Hauf J."/>
            <person name="Jackson D."/>
            <person name="Jones L.-M."/>
            <person name="Kaerst U."/>
            <person name="Kreft J."/>
            <person name="Kuhn M."/>
            <person name="Kunst F."/>
            <person name="Kurapkat G."/>
            <person name="Madueno E."/>
            <person name="Maitournam A."/>
            <person name="Mata Vicente J."/>
            <person name="Ng E."/>
            <person name="Nedjari H."/>
            <person name="Nordsiek G."/>
            <person name="Novella S."/>
            <person name="de Pablos B."/>
            <person name="Perez-Diaz J.-C."/>
            <person name="Purcell R."/>
            <person name="Remmel B."/>
            <person name="Rose M."/>
            <person name="Schlueter T."/>
            <person name="Simoes N."/>
            <person name="Tierrez A."/>
            <person name="Vazquez-Boland J.-A."/>
            <person name="Voss H."/>
            <person name="Wehland J."/>
            <person name="Cossart P."/>
        </authorList>
    </citation>
    <scope>NUCLEOTIDE SEQUENCE [LARGE SCALE GENOMIC DNA]</scope>
    <source>
        <strain>ATCC BAA-679 / EGD-e</strain>
    </source>
</reference>
<comment type="function">
    <text evidence="1">Binds directly to 23S rRNA. The L1 stalk is quite mobile in the ribosome, and is involved in E site tRNA release.</text>
</comment>
<comment type="function">
    <text evidence="1">Protein L1 is also a translational repressor protein, it controls the translation of the L11 operon by binding to its mRNA.</text>
</comment>
<comment type="subunit">
    <text evidence="1">Part of the 50S ribosomal subunit.</text>
</comment>
<comment type="similarity">
    <text evidence="1">Belongs to the universal ribosomal protein uL1 family.</text>
</comment>
<name>RL1_LISMO</name>
<dbReference type="EMBL" id="AL591974">
    <property type="protein sequence ID" value="CAD00776.1"/>
    <property type="molecule type" value="Genomic_DNA"/>
</dbReference>
<dbReference type="PIR" id="AB1106">
    <property type="entry name" value="AB1106"/>
</dbReference>
<dbReference type="RefSeq" id="NP_463780.1">
    <property type="nucleotide sequence ID" value="NC_003210.1"/>
</dbReference>
<dbReference type="RefSeq" id="WP_010989382.1">
    <property type="nucleotide sequence ID" value="NZ_CP149495.1"/>
</dbReference>
<dbReference type="SMR" id="Q8YAA4"/>
<dbReference type="STRING" id="169963.gene:17592900"/>
<dbReference type="PaxDb" id="169963-lmo0249"/>
<dbReference type="EnsemblBacteria" id="CAD00776">
    <property type="protein sequence ID" value="CAD00776"/>
    <property type="gene ID" value="CAD00776"/>
</dbReference>
<dbReference type="GeneID" id="57075237"/>
<dbReference type="GeneID" id="987301"/>
<dbReference type="KEGG" id="lmo:lmo0249"/>
<dbReference type="PATRIC" id="fig|169963.11.peg.257"/>
<dbReference type="eggNOG" id="COG0081">
    <property type="taxonomic scope" value="Bacteria"/>
</dbReference>
<dbReference type="HOGENOM" id="CLU_062853_0_0_9"/>
<dbReference type="OrthoDB" id="9803740at2"/>
<dbReference type="PhylomeDB" id="Q8YAA4"/>
<dbReference type="BioCyc" id="LMON169963:LMO0249-MONOMER"/>
<dbReference type="Proteomes" id="UP000000817">
    <property type="component" value="Chromosome"/>
</dbReference>
<dbReference type="GO" id="GO:0015934">
    <property type="term" value="C:large ribosomal subunit"/>
    <property type="evidence" value="ECO:0007669"/>
    <property type="project" value="InterPro"/>
</dbReference>
<dbReference type="GO" id="GO:0019843">
    <property type="term" value="F:rRNA binding"/>
    <property type="evidence" value="ECO:0007669"/>
    <property type="project" value="UniProtKB-UniRule"/>
</dbReference>
<dbReference type="GO" id="GO:0003735">
    <property type="term" value="F:structural constituent of ribosome"/>
    <property type="evidence" value="ECO:0007669"/>
    <property type="project" value="InterPro"/>
</dbReference>
<dbReference type="GO" id="GO:0000049">
    <property type="term" value="F:tRNA binding"/>
    <property type="evidence" value="ECO:0007669"/>
    <property type="project" value="UniProtKB-KW"/>
</dbReference>
<dbReference type="GO" id="GO:0006417">
    <property type="term" value="P:regulation of translation"/>
    <property type="evidence" value="ECO:0007669"/>
    <property type="project" value="UniProtKB-KW"/>
</dbReference>
<dbReference type="GO" id="GO:0006412">
    <property type="term" value="P:translation"/>
    <property type="evidence" value="ECO:0007669"/>
    <property type="project" value="UniProtKB-UniRule"/>
</dbReference>
<dbReference type="CDD" id="cd00403">
    <property type="entry name" value="Ribosomal_L1"/>
    <property type="match status" value="1"/>
</dbReference>
<dbReference type="FunFam" id="3.40.50.790:FF:000001">
    <property type="entry name" value="50S ribosomal protein L1"/>
    <property type="match status" value="1"/>
</dbReference>
<dbReference type="Gene3D" id="3.30.190.20">
    <property type="match status" value="1"/>
</dbReference>
<dbReference type="Gene3D" id="3.40.50.790">
    <property type="match status" value="1"/>
</dbReference>
<dbReference type="HAMAP" id="MF_01318_B">
    <property type="entry name" value="Ribosomal_uL1_B"/>
    <property type="match status" value="1"/>
</dbReference>
<dbReference type="InterPro" id="IPR005878">
    <property type="entry name" value="Ribosom_uL1_bac-type"/>
</dbReference>
<dbReference type="InterPro" id="IPR002143">
    <property type="entry name" value="Ribosomal_uL1"/>
</dbReference>
<dbReference type="InterPro" id="IPR023674">
    <property type="entry name" value="Ribosomal_uL1-like"/>
</dbReference>
<dbReference type="InterPro" id="IPR028364">
    <property type="entry name" value="Ribosomal_uL1/biogenesis"/>
</dbReference>
<dbReference type="InterPro" id="IPR016095">
    <property type="entry name" value="Ribosomal_uL1_3-a/b-sand"/>
</dbReference>
<dbReference type="InterPro" id="IPR023673">
    <property type="entry name" value="Ribosomal_uL1_CS"/>
</dbReference>
<dbReference type="NCBIfam" id="TIGR01169">
    <property type="entry name" value="rplA_bact"/>
    <property type="match status" value="1"/>
</dbReference>
<dbReference type="PANTHER" id="PTHR36427">
    <property type="entry name" value="54S RIBOSOMAL PROTEIN L1, MITOCHONDRIAL"/>
    <property type="match status" value="1"/>
</dbReference>
<dbReference type="PANTHER" id="PTHR36427:SF3">
    <property type="entry name" value="LARGE RIBOSOMAL SUBUNIT PROTEIN UL1M"/>
    <property type="match status" value="1"/>
</dbReference>
<dbReference type="Pfam" id="PF00687">
    <property type="entry name" value="Ribosomal_L1"/>
    <property type="match status" value="1"/>
</dbReference>
<dbReference type="PIRSF" id="PIRSF002155">
    <property type="entry name" value="Ribosomal_L1"/>
    <property type="match status" value="1"/>
</dbReference>
<dbReference type="SUPFAM" id="SSF56808">
    <property type="entry name" value="Ribosomal protein L1"/>
    <property type="match status" value="1"/>
</dbReference>
<dbReference type="PROSITE" id="PS01199">
    <property type="entry name" value="RIBOSOMAL_L1"/>
    <property type="match status" value="1"/>
</dbReference>
<gene>
    <name evidence="1" type="primary">rplA</name>
    <name type="ordered locus">lmo0249</name>
</gene>
<feature type="chain" id="PRO_0000125682" description="Large ribosomal subunit protein uL1">
    <location>
        <begin position="1"/>
        <end position="229"/>
    </location>
</feature>
<sequence>MAKKGKKYQDALKQIDANKVYTAEEAVELAKKIDFAKFDATVEVAFRLGVDPKKADQQIRGAVVLPNGTGKTQRVLVFAKGEKAKEAEAAGADYVGESEFVEKINQGWFDFDVIVATPDMMGEVGKLGRVLGPKGLMPNPKTGTVTMDVTKAVNEIKAGKVEYRVDKAGNVHAAIGKVSFDAAKLVENFRTVNDVLQKAKPAAAKGTYVKNLSVTTTFGPGIKVDPASL</sequence>